<proteinExistence type="inferred from homology"/>
<reference key="1">
    <citation type="journal article" date="2001" name="Proc. Natl. Acad. Sci. U.S.A.">
        <title>Complete genome sequence of Caulobacter crescentus.</title>
        <authorList>
            <person name="Nierman W.C."/>
            <person name="Feldblyum T.V."/>
            <person name="Laub M.T."/>
            <person name="Paulsen I.T."/>
            <person name="Nelson K.E."/>
            <person name="Eisen J.A."/>
            <person name="Heidelberg J.F."/>
            <person name="Alley M.R.K."/>
            <person name="Ohta N."/>
            <person name="Maddock J.R."/>
            <person name="Potocka I."/>
            <person name="Nelson W.C."/>
            <person name="Newton A."/>
            <person name="Stephens C."/>
            <person name="Phadke N.D."/>
            <person name="Ely B."/>
            <person name="DeBoy R.T."/>
            <person name="Dodson R.J."/>
            <person name="Durkin A.S."/>
            <person name="Gwinn M.L."/>
            <person name="Haft D.H."/>
            <person name="Kolonay J.F."/>
            <person name="Smit J."/>
            <person name="Craven M.B."/>
            <person name="Khouri H.M."/>
            <person name="Shetty J."/>
            <person name="Berry K.J."/>
            <person name="Utterback T.R."/>
            <person name="Tran K."/>
            <person name="Wolf A.M."/>
            <person name="Vamathevan J.J."/>
            <person name="Ermolaeva M.D."/>
            <person name="White O."/>
            <person name="Salzberg S.L."/>
            <person name="Venter J.C."/>
            <person name="Shapiro L."/>
            <person name="Fraser C.M."/>
        </authorList>
    </citation>
    <scope>NUCLEOTIDE SEQUENCE [LARGE SCALE GENOMIC DNA]</scope>
    <source>
        <strain>ATCC 19089 / CIP 103742 / CB 15</strain>
    </source>
</reference>
<sequence>MAAFPFEIEATDGKARTGVLKTPRGDIRTPAFMPVGTAATVKAMTVDQVKDTGADIILGNTYHLMLRPSAERVKRLGGLHKFMRWDKPILTDSGGFQVMSLSGISKLTEEAVTFSSHVDGSKHVLTPERSIEIQADLLGSDIVMQLDECVAWPAEEARARKGMELSARWAKRSKDAFGTRDTQVLFGIQQGSTFENLRRESSERLREIGFDGYAIGGLAVGEGHQAMCEVLDYAPGFLPEDRPRYLMGVGKPIDLVEAVARGVDMFDCVLPTRSGRHGQAWTWDGPINLKNAKYAEDETPLDPDSDCPASRDYSKAYLRHLFKAEEILGQVLLSWHNIAFFQALTAAMRAAIAEGRFEQFRRDFAARHLGG</sequence>
<comment type="function">
    <text evidence="1">Catalyzes the base-exchange of a guanine (G) residue with the queuine precursor 7-aminomethyl-7-deazaguanine (PreQ1) at position 34 (anticodon wobble position) in tRNAs with GU(N) anticodons (tRNA-Asp, -Asn, -His and -Tyr). Catalysis occurs through a double-displacement mechanism. The nucleophile active site attacks the C1' of nucleotide 34 to detach the guanine base from the RNA, forming a covalent enzyme-RNA intermediate. The proton acceptor active site deprotonates the incoming PreQ1, allowing a nucleophilic attack on the C1' of the ribose to form the product. After dissociation, two additional enzymatic reactions on the tRNA convert PreQ1 to queuine (Q), resulting in the hypermodified nucleoside queuosine (7-(((4,5-cis-dihydroxy-2-cyclopenten-1-yl)amino)methyl)-7-deazaguanosine).</text>
</comment>
<comment type="catalytic activity">
    <reaction evidence="1">
        <text>7-aminomethyl-7-carbaguanine + guanosine(34) in tRNA = 7-aminomethyl-7-carbaguanosine(34) in tRNA + guanine</text>
        <dbReference type="Rhea" id="RHEA:24104"/>
        <dbReference type="Rhea" id="RHEA-COMP:10341"/>
        <dbReference type="Rhea" id="RHEA-COMP:10342"/>
        <dbReference type="ChEBI" id="CHEBI:16235"/>
        <dbReference type="ChEBI" id="CHEBI:58703"/>
        <dbReference type="ChEBI" id="CHEBI:74269"/>
        <dbReference type="ChEBI" id="CHEBI:82833"/>
        <dbReference type="EC" id="2.4.2.29"/>
    </reaction>
</comment>
<comment type="pathway">
    <text evidence="1">tRNA modification; tRNA-queuosine biosynthesis.</text>
</comment>
<comment type="subunit">
    <text evidence="1">Homodimer. Within each dimer, one monomer is responsible for RNA recognition and catalysis, while the other monomer binds to the replacement base PreQ1.</text>
</comment>
<comment type="similarity">
    <text evidence="1">Belongs to the queuine tRNA-ribosyltransferase family.</text>
</comment>
<feature type="chain" id="PRO_0000135462" description="Queuine tRNA-ribosyltransferase">
    <location>
        <begin position="1"/>
        <end position="371"/>
    </location>
</feature>
<feature type="region of interest" description="RNA binding" evidence="1">
    <location>
        <begin position="248"/>
        <end position="254"/>
    </location>
</feature>
<feature type="region of interest" description="RNA binding; important for wobble base 34 recognition" evidence="1">
    <location>
        <begin position="272"/>
        <end position="276"/>
    </location>
</feature>
<feature type="active site" description="Proton acceptor" evidence="1">
    <location>
        <position position="92"/>
    </location>
</feature>
<feature type="active site" description="Nucleophile" evidence="1">
    <location>
        <position position="267"/>
    </location>
</feature>
<feature type="binding site" evidence="1">
    <location>
        <begin position="92"/>
        <end position="96"/>
    </location>
    <ligand>
        <name>substrate</name>
    </ligand>
</feature>
<feature type="binding site" evidence="1">
    <location>
        <position position="147"/>
    </location>
    <ligand>
        <name>substrate</name>
    </ligand>
</feature>
<feature type="binding site" evidence="1">
    <location>
        <position position="190"/>
    </location>
    <ligand>
        <name>substrate</name>
    </ligand>
</feature>
<feature type="binding site" evidence="1">
    <location>
        <position position="217"/>
    </location>
    <ligand>
        <name>substrate</name>
    </ligand>
</feature>
<organism>
    <name type="scientific">Caulobacter vibrioides (strain ATCC 19089 / CIP 103742 / CB 15)</name>
    <name type="common">Caulobacter crescentus</name>
    <dbReference type="NCBI Taxonomy" id="190650"/>
    <lineage>
        <taxon>Bacteria</taxon>
        <taxon>Pseudomonadati</taxon>
        <taxon>Pseudomonadota</taxon>
        <taxon>Alphaproteobacteria</taxon>
        <taxon>Caulobacterales</taxon>
        <taxon>Caulobacteraceae</taxon>
        <taxon>Caulobacter</taxon>
    </lineage>
</organism>
<accession>Q9A7Y1</accession>
<keyword id="KW-0328">Glycosyltransferase</keyword>
<keyword id="KW-0671">Queuosine biosynthesis</keyword>
<keyword id="KW-1185">Reference proteome</keyword>
<keyword id="KW-0808">Transferase</keyword>
<keyword id="KW-0819">tRNA processing</keyword>
<name>TGT_CAUVC</name>
<protein>
    <recommendedName>
        <fullName evidence="1">Queuine tRNA-ribosyltransferase</fullName>
        <ecNumber evidence="1">2.4.2.29</ecNumber>
    </recommendedName>
    <alternativeName>
        <fullName evidence="1">Guanine insertion enzyme</fullName>
    </alternativeName>
    <alternativeName>
        <fullName evidence="1">tRNA-guanine transglycosylase</fullName>
    </alternativeName>
</protein>
<gene>
    <name evidence="1" type="primary">tgt</name>
    <name type="ordered locus">CC_1588</name>
</gene>
<dbReference type="EC" id="2.4.2.29" evidence="1"/>
<dbReference type="EMBL" id="AE005673">
    <property type="protein sequence ID" value="AAK23567.1"/>
    <property type="molecule type" value="Genomic_DNA"/>
</dbReference>
<dbReference type="PIR" id="C87446">
    <property type="entry name" value="C87446"/>
</dbReference>
<dbReference type="RefSeq" id="NP_420399.1">
    <property type="nucleotide sequence ID" value="NC_002696.2"/>
</dbReference>
<dbReference type="RefSeq" id="WP_010919462.1">
    <property type="nucleotide sequence ID" value="NC_002696.2"/>
</dbReference>
<dbReference type="SMR" id="Q9A7Y1"/>
<dbReference type="STRING" id="190650.CC_1588"/>
<dbReference type="EnsemblBacteria" id="AAK23567">
    <property type="protein sequence ID" value="AAK23567"/>
    <property type="gene ID" value="CC_1588"/>
</dbReference>
<dbReference type="KEGG" id="ccr:CC_1588"/>
<dbReference type="PATRIC" id="fig|190650.5.peg.1616"/>
<dbReference type="eggNOG" id="COG0343">
    <property type="taxonomic scope" value="Bacteria"/>
</dbReference>
<dbReference type="HOGENOM" id="CLU_022060_0_1_5"/>
<dbReference type="BioCyc" id="CAULO:CC1588-MONOMER"/>
<dbReference type="UniPathway" id="UPA00392"/>
<dbReference type="Proteomes" id="UP000001816">
    <property type="component" value="Chromosome"/>
</dbReference>
<dbReference type="GO" id="GO:0005829">
    <property type="term" value="C:cytosol"/>
    <property type="evidence" value="ECO:0007669"/>
    <property type="project" value="TreeGrafter"/>
</dbReference>
<dbReference type="GO" id="GO:0008479">
    <property type="term" value="F:tRNA-guanosine(34) queuine transglycosylase activity"/>
    <property type="evidence" value="ECO:0007669"/>
    <property type="project" value="UniProtKB-UniRule"/>
</dbReference>
<dbReference type="GO" id="GO:0008616">
    <property type="term" value="P:queuosine biosynthetic process"/>
    <property type="evidence" value="ECO:0007669"/>
    <property type="project" value="UniProtKB-UniRule"/>
</dbReference>
<dbReference type="GO" id="GO:0002099">
    <property type="term" value="P:tRNA wobble guanine modification"/>
    <property type="evidence" value="ECO:0007669"/>
    <property type="project" value="TreeGrafter"/>
</dbReference>
<dbReference type="GO" id="GO:0101030">
    <property type="term" value="P:tRNA-guanine transglycosylation"/>
    <property type="evidence" value="ECO:0007669"/>
    <property type="project" value="InterPro"/>
</dbReference>
<dbReference type="FunFam" id="3.20.20.105:FF:000001">
    <property type="entry name" value="Queuine tRNA-ribosyltransferase"/>
    <property type="match status" value="1"/>
</dbReference>
<dbReference type="Gene3D" id="3.20.20.105">
    <property type="entry name" value="Queuine tRNA-ribosyltransferase-like"/>
    <property type="match status" value="1"/>
</dbReference>
<dbReference type="HAMAP" id="MF_00168">
    <property type="entry name" value="Q_tRNA_Tgt"/>
    <property type="match status" value="1"/>
</dbReference>
<dbReference type="InterPro" id="IPR050076">
    <property type="entry name" value="ArchSynthase1/Queuine_TRR"/>
</dbReference>
<dbReference type="InterPro" id="IPR004803">
    <property type="entry name" value="TGT"/>
</dbReference>
<dbReference type="InterPro" id="IPR036511">
    <property type="entry name" value="TGT-like_sf"/>
</dbReference>
<dbReference type="InterPro" id="IPR002616">
    <property type="entry name" value="tRNA_ribo_trans-like"/>
</dbReference>
<dbReference type="NCBIfam" id="TIGR00430">
    <property type="entry name" value="Q_tRNA_tgt"/>
    <property type="match status" value="1"/>
</dbReference>
<dbReference type="NCBIfam" id="TIGR00449">
    <property type="entry name" value="tgt_general"/>
    <property type="match status" value="1"/>
</dbReference>
<dbReference type="PANTHER" id="PTHR46499">
    <property type="entry name" value="QUEUINE TRNA-RIBOSYLTRANSFERASE"/>
    <property type="match status" value="1"/>
</dbReference>
<dbReference type="PANTHER" id="PTHR46499:SF1">
    <property type="entry name" value="QUEUINE TRNA-RIBOSYLTRANSFERASE"/>
    <property type="match status" value="1"/>
</dbReference>
<dbReference type="Pfam" id="PF01702">
    <property type="entry name" value="TGT"/>
    <property type="match status" value="1"/>
</dbReference>
<dbReference type="SUPFAM" id="SSF51713">
    <property type="entry name" value="tRNA-guanine transglycosylase"/>
    <property type="match status" value="1"/>
</dbReference>
<evidence type="ECO:0000255" key="1">
    <source>
        <dbReference type="HAMAP-Rule" id="MF_00168"/>
    </source>
</evidence>